<keyword id="KW-0066">ATP synthesis</keyword>
<keyword id="KW-0997">Cell inner membrane</keyword>
<keyword id="KW-1003">Cell membrane</keyword>
<keyword id="KW-0139">CF(1)</keyword>
<keyword id="KW-0375">Hydrogen ion transport</keyword>
<keyword id="KW-0406">Ion transport</keyword>
<keyword id="KW-0472">Membrane</keyword>
<keyword id="KW-1185">Reference proteome</keyword>
<keyword id="KW-0813">Transport</keyword>
<organism>
    <name type="scientific">Bradyrhizobium sp. (strain BTAi1 / ATCC BAA-1182)</name>
    <dbReference type="NCBI Taxonomy" id="288000"/>
    <lineage>
        <taxon>Bacteria</taxon>
        <taxon>Pseudomonadati</taxon>
        <taxon>Pseudomonadota</taxon>
        <taxon>Alphaproteobacteria</taxon>
        <taxon>Hyphomicrobiales</taxon>
        <taxon>Nitrobacteraceae</taxon>
        <taxon>Bradyrhizobium</taxon>
    </lineage>
</organism>
<comment type="function">
    <text evidence="1">F(1)F(0) ATP synthase produces ATP from ADP in the presence of a proton or sodium gradient. F-type ATPases consist of two structural domains, F(1) containing the extramembraneous catalytic core and F(0) containing the membrane proton channel, linked together by a central stalk and a peripheral stalk. During catalysis, ATP synthesis in the catalytic domain of F(1) is coupled via a rotary mechanism of the central stalk subunits to proton translocation.</text>
</comment>
<comment type="function">
    <text evidence="1">This protein is part of the stalk that links CF(0) to CF(1). It either transmits conformational changes from CF(0) to CF(1) or is implicated in proton conduction.</text>
</comment>
<comment type="subunit">
    <text evidence="1">F-type ATPases have 2 components, F(1) - the catalytic core - and F(0) - the membrane proton channel. F(1) has five subunits: alpha(3), beta(3), gamma(1), delta(1), epsilon(1). CF(0) has four main subunits: a(1), b(1), b'(1) and c(10-14). The alpha and beta chains form an alternating ring which encloses part of the gamma chain. F(1) is attached to F(0) by a central stalk formed by the gamma and epsilon chains, while a peripheral stalk is formed by the delta, b and b' chains.</text>
</comment>
<comment type="subcellular location">
    <subcellularLocation>
        <location evidence="1">Cell inner membrane</location>
        <topology evidence="1">Peripheral membrane protein</topology>
    </subcellularLocation>
</comment>
<comment type="similarity">
    <text evidence="1">Belongs to the ATPase delta chain family.</text>
</comment>
<feature type="chain" id="PRO_1000184659" description="ATP synthase subunit delta">
    <location>
        <begin position="1"/>
        <end position="186"/>
    </location>
</feature>
<name>ATPD_BRASB</name>
<sequence length="186" mass="19583">MAAEDPPVSGVSGRYATALFELARDEKSVDAVKADLDKFNALLDESADLKRLVRSPVFGADVQLKALNAVLDKAGIAGVAANVLRVLTANRRLFAVADVIRAFNALVAKYKGEATADVTVAEPLSDKNLDALKASLKTVTGKDVALNVKVDPAIIGGLVVKLGSRMIDSSLRTKLNSIKHAMKEAG</sequence>
<dbReference type="EMBL" id="CP000494">
    <property type="protein sequence ID" value="ABQ32691.1"/>
    <property type="molecule type" value="Genomic_DNA"/>
</dbReference>
<dbReference type="RefSeq" id="WP_012040744.1">
    <property type="nucleotide sequence ID" value="NC_009485.1"/>
</dbReference>
<dbReference type="SMR" id="A5E947"/>
<dbReference type="STRING" id="288000.BBta_0405"/>
<dbReference type="KEGG" id="bbt:BBta_0405"/>
<dbReference type="eggNOG" id="COG0712">
    <property type="taxonomic scope" value="Bacteria"/>
</dbReference>
<dbReference type="HOGENOM" id="CLU_085114_0_1_5"/>
<dbReference type="OrthoDB" id="9796185at2"/>
<dbReference type="Proteomes" id="UP000000246">
    <property type="component" value="Chromosome"/>
</dbReference>
<dbReference type="GO" id="GO:0005886">
    <property type="term" value="C:plasma membrane"/>
    <property type="evidence" value="ECO:0007669"/>
    <property type="project" value="UniProtKB-SubCell"/>
</dbReference>
<dbReference type="GO" id="GO:0045259">
    <property type="term" value="C:proton-transporting ATP synthase complex"/>
    <property type="evidence" value="ECO:0007669"/>
    <property type="project" value="UniProtKB-KW"/>
</dbReference>
<dbReference type="GO" id="GO:0046933">
    <property type="term" value="F:proton-transporting ATP synthase activity, rotational mechanism"/>
    <property type="evidence" value="ECO:0007669"/>
    <property type="project" value="UniProtKB-UniRule"/>
</dbReference>
<dbReference type="Gene3D" id="1.10.520.20">
    <property type="entry name" value="N-terminal domain of the delta subunit of the F1F0-ATP synthase"/>
    <property type="match status" value="1"/>
</dbReference>
<dbReference type="HAMAP" id="MF_01416">
    <property type="entry name" value="ATP_synth_delta_bact"/>
    <property type="match status" value="1"/>
</dbReference>
<dbReference type="InterPro" id="IPR026015">
    <property type="entry name" value="ATP_synth_OSCP/delta_N_sf"/>
</dbReference>
<dbReference type="InterPro" id="IPR020781">
    <property type="entry name" value="ATPase_OSCP/d_CS"/>
</dbReference>
<dbReference type="InterPro" id="IPR000711">
    <property type="entry name" value="ATPase_OSCP/dsu"/>
</dbReference>
<dbReference type="NCBIfam" id="TIGR01145">
    <property type="entry name" value="ATP_synt_delta"/>
    <property type="match status" value="1"/>
</dbReference>
<dbReference type="NCBIfam" id="NF004406">
    <property type="entry name" value="PRK05758.3-2"/>
    <property type="match status" value="1"/>
</dbReference>
<dbReference type="PANTHER" id="PTHR11910">
    <property type="entry name" value="ATP SYNTHASE DELTA CHAIN"/>
    <property type="match status" value="1"/>
</dbReference>
<dbReference type="Pfam" id="PF00213">
    <property type="entry name" value="OSCP"/>
    <property type="match status" value="1"/>
</dbReference>
<dbReference type="PRINTS" id="PR00125">
    <property type="entry name" value="ATPASEDELTA"/>
</dbReference>
<dbReference type="SUPFAM" id="SSF47928">
    <property type="entry name" value="N-terminal domain of the delta subunit of the F1F0-ATP synthase"/>
    <property type="match status" value="1"/>
</dbReference>
<dbReference type="PROSITE" id="PS00389">
    <property type="entry name" value="ATPASE_DELTA"/>
    <property type="match status" value="1"/>
</dbReference>
<evidence type="ECO:0000255" key="1">
    <source>
        <dbReference type="HAMAP-Rule" id="MF_01416"/>
    </source>
</evidence>
<reference key="1">
    <citation type="journal article" date="2007" name="Science">
        <title>Legumes symbioses: absence of nod genes in photosynthetic bradyrhizobia.</title>
        <authorList>
            <person name="Giraud E."/>
            <person name="Moulin L."/>
            <person name="Vallenet D."/>
            <person name="Barbe V."/>
            <person name="Cytryn E."/>
            <person name="Avarre J.-C."/>
            <person name="Jaubert M."/>
            <person name="Simon D."/>
            <person name="Cartieaux F."/>
            <person name="Prin Y."/>
            <person name="Bena G."/>
            <person name="Hannibal L."/>
            <person name="Fardoux J."/>
            <person name="Kojadinovic M."/>
            <person name="Vuillet L."/>
            <person name="Lajus A."/>
            <person name="Cruveiller S."/>
            <person name="Rouy Z."/>
            <person name="Mangenot S."/>
            <person name="Segurens B."/>
            <person name="Dossat C."/>
            <person name="Franck W.L."/>
            <person name="Chang W.-S."/>
            <person name="Saunders E."/>
            <person name="Bruce D."/>
            <person name="Richardson P."/>
            <person name="Normand P."/>
            <person name="Dreyfus B."/>
            <person name="Pignol D."/>
            <person name="Stacey G."/>
            <person name="Emerich D."/>
            <person name="Vermeglio A."/>
            <person name="Medigue C."/>
            <person name="Sadowsky M."/>
        </authorList>
    </citation>
    <scope>NUCLEOTIDE SEQUENCE [LARGE SCALE GENOMIC DNA]</scope>
    <source>
        <strain>BTAi1 / ATCC BAA-1182</strain>
    </source>
</reference>
<accession>A5E947</accession>
<protein>
    <recommendedName>
        <fullName evidence="1">ATP synthase subunit delta</fullName>
    </recommendedName>
    <alternativeName>
        <fullName evidence="1">ATP synthase F(1) sector subunit delta</fullName>
    </alternativeName>
    <alternativeName>
        <fullName evidence="1">F-type ATPase subunit delta</fullName>
        <shortName evidence="1">F-ATPase subunit delta</shortName>
    </alternativeName>
</protein>
<proteinExistence type="inferred from homology"/>
<gene>
    <name evidence="1" type="primary">atpH</name>
    <name type="ordered locus">BBta_0405</name>
</gene>